<name>NANA2_ECOL6</name>
<feature type="chain" id="PRO_0000103211" description="N-acetylneuraminate lyase 2">
    <location>
        <begin position="1"/>
        <end position="305"/>
    </location>
</feature>
<feature type="active site" description="Proton donor" evidence="1">
    <location>
        <position position="137"/>
    </location>
</feature>
<feature type="active site" description="Schiff-base intermediate with substrate" evidence="1">
    <location>
        <position position="165"/>
    </location>
</feature>
<feature type="binding site" evidence="1">
    <location>
        <position position="47"/>
    </location>
    <ligand>
        <name>aceneuramate</name>
        <dbReference type="ChEBI" id="CHEBI:173083"/>
    </ligand>
</feature>
<feature type="binding site" evidence="1">
    <location>
        <position position="48"/>
    </location>
    <ligand>
        <name>aceneuramate</name>
        <dbReference type="ChEBI" id="CHEBI:173083"/>
    </ligand>
</feature>
<feature type="binding site" evidence="1">
    <location>
        <position position="167"/>
    </location>
    <ligand>
        <name>aceneuramate</name>
        <dbReference type="ChEBI" id="CHEBI:173083"/>
    </ligand>
</feature>
<feature type="binding site" evidence="1">
    <location>
        <position position="189"/>
    </location>
    <ligand>
        <name>aceneuramate</name>
        <dbReference type="ChEBI" id="CHEBI:173083"/>
    </ligand>
</feature>
<feature type="binding site" evidence="1">
    <location>
        <position position="191"/>
    </location>
    <ligand>
        <name>aceneuramate</name>
        <dbReference type="ChEBI" id="CHEBI:173083"/>
    </ligand>
</feature>
<feature type="binding site" evidence="1">
    <location>
        <position position="192"/>
    </location>
    <ligand>
        <name>aceneuramate</name>
        <dbReference type="ChEBI" id="CHEBI:173083"/>
    </ligand>
</feature>
<feature type="binding site" evidence="1">
    <location>
        <position position="208"/>
    </location>
    <ligand>
        <name>aceneuramate</name>
        <dbReference type="ChEBI" id="CHEBI:173083"/>
    </ligand>
</feature>
<organism>
    <name type="scientific">Escherichia coli O6:H1 (strain CFT073 / ATCC 700928 / UPEC)</name>
    <dbReference type="NCBI Taxonomy" id="199310"/>
    <lineage>
        <taxon>Bacteria</taxon>
        <taxon>Pseudomonadati</taxon>
        <taxon>Pseudomonadota</taxon>
        <taxon>Gammaproteobacteria</taxon>
        <taxon>Enterobacterales</taxon>
        <taxon>Enterobacteriaceae</taxon>
        <taxon>Escherichia</taxon>
    </lineage>
</organism>
<reference key="1">
    <citation type="journal article" date="2002" name="Proc. Natl. Acad. Sci. U.S.A.">
        <title>Extensive mosaic structure revealed by the complete genome sequence of uropathogenic Escherichia coli.</title>
        <authorList>
            <person name="Welch R.A."/>
            <person name="Burland V."/>
            <person name="Plunkett G. III"/>
            <person name="Redford P."/>
            <person name="Roesch P."/>
            <person name="Rasko D."/>
            <person name="Buckles E.L."/>
            <person name="Liou S.-R."/>
            <person name="Boutin A."/>
            <person name="Hackett J."/>
            <person name="Stroud D."/>
            <person name="Mayhew G.F."/>
            <person name="Rose D.J."/>
            <person name="Zhou S."/>
            <person name="Schwartz D.C."/>
            <person name="Perna N.T."/>
            <person name="Mobley H.L.T."/>
            <person name="Donnenberg M.S."/>
            <person name="Blattner F.R."/>
        </authorList>
    </citation>
    <scope>NUCLEOTIDE SEQUENCE [LARGE SCALE GENOMIC DNA]</scope>
    <source>
        <strain>CFT073 / ATCC 700928 / UPEC</strain>
    </source>
</reference>
<proteinExistence type="inferred from homology"/>
<comment type="function">
    <text evidence="1">Catalyzes the reversible aldol cleavage of N-acetylneuraminic acid (sialic acid; Neu5Ac) to form pyruvate and N-acetylmannosamine (ManNAc) via a Schiff base intermediate.</text>
</comment>
<comment type="catalytic activity">
    <reaction evidence="1">
        <text>aceneuramate = aldehydo-N-acetyl-D-mannosamine + pyruvate</text>
        <dbReference type="Rhea" id="RHEA:23296"/>
        <dbReference type="ChEBI" id="CHEBI:15361"/>
        <dbReference type="ChEBI" id="CHEBI:17122"/>
        <dbReference type="ChEBI" id="CHEBI:173083"/>
        <dbReference type="EC" id="4.1.3.3"/>
    </reaction>
</comment>
<comment type="pathway">
    <text evidence="1">Amino-sugar metabolism; N-acetylneuraminate degradation; D-fructose 6-phosphate from N-acetylneuraminate: step 1/5.</text>
</comment>
<comment type="subunit">
    <text evidence="1">Homotetramer.</text>
</comment>
<comment type="subcellular location">
    <subcellularLocation>
        <location evidence="1">Cytoplasm</location>
    </subcellularLocation>
</comment>
<comment type="similarity">
    <text evidence="1 2">Belongs to the DapA family. NanA subfamily.</text>
</comment>
<accession>Q8FDU7</accession>
<dbReference type="EC" id="4.1.3.3" evidence="1"/>
<dbReference type="EMBL" id="AE014075">
    <property type="protein sequence ID" value="AAN82087.1"/>
    <property type="molecule type" value="Genomic_DNA"/>
</dbReference>
<dbReference type="RefSeq" id="WP_001149834.1">
    <property type="nucleotide sequence ID" value="NZ_CP051263.1"/>
</dbReference>
<dbReference type="SMR" id="Q8FDU7"/>
<dbReference type="STRING" id="199310.c3639"/>
<dbReference type="KEGG" id="ecc:c3639"/>
<dbReference type="eggNOG" id="COG0329">
    <property type="taxonomic scope" value="Bacteria"/>
</dbReference>
<dbReference type="HOGENOM" id="CLU_049343_6_0_6"/>
<dbReference type="BioCyc" id="ECOL199310:C3639-MONOMER"/>
<dbReference type="UniPathway" id="UPA00629">
    <property type="reaction ID" value="UER00680"/>
</dbReference>
<dbReference type="Proteomes" id="UP000001410">
    <property type="component" value="Chromosome"/>
</dbReference>
<dbReference type="GO" id="GO:0005829">
    <property type="term" value="C:cytosol"/>
    <property type="evidence" value="ECO:0007669"/>
    <property type="project" value="TreeGrafter"/>
</dbReference>
<dbReference type="GO" id="GO:0008747">
    <property type="term" value="F:N-acetylneuraminate lyase activity"/>
    <property type="evidence" value="ECO:0007669"/>
    <property type="project" value="UniProtKB-UniRule"/>
</dbReference>
<dbReference type="GO" id="GO:0005975">
    <property type="term" value="P:carbohydrate metabolic process"/>
    <property type="evidence" value="ECO:0007669"/>
    <property type="project" value="UniProtKB-UniRule"/>
</dbReference>
<dbReference type="GO" id="GO:0019262">
    <property type="term" value="P:N-acetylneuraminate catabolic process"/>
    <property type="evidence" value="ECO:0007669"/>
    <property type="project" value="UniProtKB-UniRule"/>
</dbReference>
<dbReference type="Gene3D" id="3.20.20.70">
    <property type="entry name" value="Aldolase class I"/>
    <property type="match status" value="1"/>
</dbReference>
<dbReference type="HAMAP" id="MF_01237">
    <property type="entry name" value="N_acetylneuram_lyase"/>
    <property type="match status" value="1"/>
</dbReference>
<dbReference type="InterPro" id="IPR013785">
    <property type="entry name" value="Aldolase_TIM"/>
</dbReference>
<dbReference type="InterPro" id="IPR002220">
    <property type="entry name" value="DapA-like"/>
</dbReference>
<dbReference type="InterPro" id="IPR005264">
    <property type="entry name" value="NanA"/>
</dbReference>
<dbReference type="InterPro" id="IPR020625">
    <property type="entry name" value="Schiff_base-form_aldolases_AS"/>
</dbReference>
<dbReference type="InterPro" id="IPR020624">
    <property type="entry name" value="Schiff_base-form_aldolases_CS"/>
</dbReference>
<dbReference type="NCBIfam" id="TIGR00683">
    <property type="entry name" value="nanA"/>
    <property type="match status" value="1"/>
</dbReference>
<dbReference type="NCBIfam" id="NF003164">
    <property type="entry name" value="PRK04147.1"/>
    <property type="match status" value="1"/>
</dbReference>
<dbReference type="PANTHER" id="PTHR42849">
    <property type="entry name" value="N-ACETYLNEURAMINATE LYASE"/>
    <property type="match status" value="1"/>
</dbReference>
<dbReference type="PANTHER" id="PTHR42849:SF1">
    <property type="entry name" value="N-ACETYLNEURAMINATE LYASE"/>
    <property type="match status" value="1"/>
</dbReference>
<dbReference type="Pfam" id="PF00701">
    <property type="entry name" value="DHDPS"/>
    <property type="match status" value="1"/>
</dbReference>
<dbReference type="PIRSF" id="PIRSF001365">
    <property type="entry name" value="DHDPS"/>
    <property type="match status" value="1"/>
</dbReference>
<dbReference type="PRINTS" id="PR00146">
    <property type="entry name" value="DHPICSNTHASE"/>
</dbReference>
<dbReference type="SMART" id="SM01130">
    <property type="entry name" value="DHDPS"/>
    <property type="match status" value="1"/>
</dbReference>
<dbReference type="SUPFAM" id="SSF51569">
    <property type="entry name" value="Aldolase"/>
    <property type="match status" value="1"/>
</dbReference>
<dbReference type="PROSITE" id="PS00665">
    <property type="entry name" value="DHDPS_1"/>
    <property type="match status" value="1"/>
</dbReference>
<dbReference type="PROSITE" id="PS00666">
    <property type="entry name" value="DHDPS_2"/>
    <property type="match status" value="1"/>
</dbReference>
<protein>
    <recommendedName>
        <fullName evidence="1">N-acetylneuraminate lyase 2</fullName>
        <shortName evidence="1">NAL 2</shortName>
        <shortName evidence="1">Neu5Ac lyase 2</shortName>
        <ecNumber evidence="1">4.1.3.3</ecNumber>
    </recommendedName>
    <alternativeName>
        <fullName evidence="1">N-acetylneuraminate pyruvate-lyase 2</fullName>
    </alternativeName>
    <alternativeName>
        <fullName evidence="1">N-acetylneuraminic acid aldolase 2</fullName>
    </alternativeName>
    <alternativeName>
        <fullName evidence="1">Sialate lyase 2</fullName>
    </alternativeName>
    <alternativeName>
        <fullName evidence="1">Sialic acid aldolase 2</fullName>
    </alternativeName>
    <alternativeName>
        <fullName evidence="1">Sialic acid lyase 2</fullName>
    </alternativeName>
</protein>
<evidence type="ECO:0000255" key="1">
    <source>
        <dbReference type="HAMAP-Rule" id="MF_01237"/>
    </source>
</evidence>
<evidence type="ECO:0000305" key="2"/>
<keyword id="KW-0119">Carbohydrate metabolism</keyword>
<keyword id="KW-0963">Cytoplasm</keyword>
<keyword id="KW-0456">Lyase</keyword>
<keyword id="KW-1185">Reference proteome</keyword>
<keyword id="KW-0704">Schiff base</keyword>
<sequence length="305" mass="34098">MQCEFKGVISALPTPYDQSQQIDMESLRKLIRFNIEQNIKGLYVGGSTGEAFLQNVAEREKILETVADESDGRLTLIAHVGGISTAESEVLAKAAKKYGYHAISAVTPFYYPFSFEEHCIHYRKIIDSADGLPMVVYNIPALSGVRFSLDQINELVTIPRVCALKQTSGDLFQMEQIKRNHPELVLYNGYDEIFASGLIAGADGGIGSTYNIMGWRYLEIFEAVKNNDVIKAKEMQVACNQVIDTLIQSGVLAGIKTLLYYMGIINTPVCRSPFSPVKEKNLDVLSKLAERLFEEHDRNKKMKII</sequence>
<gene>
    <name evidence="1" type="primary">nanA2</name>
    <name type="ordered locus">c3639</name>
</gene>